<gene>
    <name evidence="1" type="primary">iolC</name>
    <name type="ordered locus">Cbei_4550</name>
</gene>
<keyword id="KW-0067">ATP-binding</keyword>
<keyword id="KW-0418">Kinase</keyword>
<keyword id="KW-0547">Nucleotide-binding</keyword>
<keyword id="KW-0808">Transferase</keyword>
<evidence type="ECO:0000255" key="1">
    <source>
        <dbReference type="HAMAP-Rule" id="MF_01668"/>
    </source>
</evidence>
<comment type="function">
    <text evidence="1">Catalyzes the phosphorylation of 5-dehydro-2-deoxy-D-gluconate (2-deoxy-5-keto-D-gluconate or DKG) to 6-phospho-5-dehydro-2-deoxy-D-gluconate (DKGP).</text>
</comment>
<comment type="catalytic activity">
    <reaction evidence="1">
        <text>5-dehydro-2-deoxy-D-gluconate + ATP = 6-phospho-5-dehydro-2-deoxy-D-gluconate + ADP + H(+)</text>
        <dbReference type="Rhea" id="RHEA:13497"/>
        <dbReference type="ChEBI" id="CHEBI:15378"/>
        <dbReference type="ChEBI" id="CHEBI:16669"/>
        <dbReference type="ChEBI" id="CHEBI:30616"/>
        <dbReference type="ChEBI" id="CHEBI:57949"/>
        <dbReference type="ChEBI" id="CHEBI:456216"/>
        <dbReference type="EC" id="2.7.1.92"/>
    </reaction>
</comment>
<comment type="pathway">
    <text evidence="1">Polyol metabolism; myo-inositol degradation into acetyl-CoA; acetyl-CoA from myo-inositol: step 5/7.</text>
</comment>
<comment type="similarity">
    <text evidence="1">Belongs to the carbohydrate kinase PfkB family.</text>
</comment>
<accession>A6M229</accession>
<organism>
    <name type="scientific">Clostridium beijerinckii (strain ATCC 51743 / NCIMB 8052)</name>
    <name type="common">Clostridium acetobutylicum</name>
    <dbReference type="NCBI Taxonomy" id="290402"/>
    <lineage>
        <taxon>Bacteria</taxon>
        <taxon>Bacillati</taxon>
        <taxon>Bacillota</taxon>
        <taxon>Clostridia</taxon>
        <taxon>Eubacteriales</taxon>
        <taxon>Clostridiaceae</taxon>
        <taxon>Clostridium</taxon>
    </lineage>
</organism>
<dbReference type="EC" id="2.7.1.92" evidence="1"/>
<dbReference type="EMBL" id="CP000721">
    <property type="protein sequence ID" value="ABR36659.1"/>
    <property type="molecule type" value="Genomic_DNA"/>
</dbReference>
<dbReference type="RefSeq" id="WP_012060706.1">
    <property type="nucleotide sequence ID" value="NC_009617.1"/>
</dbReference>
<dbReference type="SMR" id="A6M229"/>
<dbReference type="GeneID" id="66347413"/>
<dbReference type="KEGG" id="cbe:Cbei_4550"/>
<dbReference type="eggNOG" id="COG0524">
    <property type="taxonomic scope" value="Bacteria"/>
</dbReference>
<dbReference type="HOGENOM" id="CLU_027634_6_0_9"/>
<dbReference type="UniPathway" id="UPA00076">
    <property type="reaction ID" value="UER00146"/>
</dbReference>
<dbReference type="Proteomes" id="UP000000565">
    <property type="component" value="Chromosome"/>
</dbReference>
<dbReference type="GO" id="GO:0047590">
    <property type="term" value="F:5-dehydro-2-deoxygluconokinase activity"/>
    <property type="evidence" value="ECO:0007669"/>
    <property type="project" value="UniProtKB-UniRule"/>
</dbReference>
<dbReference type="GO" id="GO:0005524">
    <property type="term" value="F:ATP binding"/>
    <property type="evidence" value="ECO:0007669"/>
    <property type="project" value="UniProtKB-UniRule"/>
</dbReference>
<dbReference type="GO" id="GO:0019310">
    <property type="term" value="P:inositol catabolic process"/>
    <property type="evidence" value="ECO:0007669"/>
    <property type="project" value="UniProtKB-UniRule"/>
</dbReference>
<dbReference type="CDD" id="cd01166">
    <property type="entry name" value="KdgK"/>
    <property type="match status" value="1"/>
</dbReference>
<dbReference type="Gene3D" id="3.40.1190.20">
    <property type="match status" value="1"/>
</dbReference>
<dbReference type="Gene3D" id="2.20.150.10">
    <property type="entry name" value="putative 5-dehydro-2- deoxygluconokinase"/>
    <property type="match status" value="1"/>
</dbReference>
<dbReference type="HAMAP" id="MF_01668">
    <property type="entry name" value="IolC"/>
    <property type="match status" value="1"/>
</dbReference>
<dbReference type="InterPro" id="IPR002173">
    <property type="entry name" value="Carboh/pur_kinase_PfkB_CS"/>
</dbReference>
<dbReference type="InterPro" id="IPR022841">
    <property type="entry name" value="DKG_kinase_firmi"/>
</dbReference>
<dbReference type="InterPro" id="IPR030830">
    <property type="entry name" value="Myo_inos_IolC"/>
</dbReference>
<dbReference type="InterPro" id="IPR023314">
    <property type="entry name" value="Myo_inos_IolC-like_sf"/>
</dbReference>
<dbReference type="InterPro" id="IPR050306">
    <property type="entry name" value="PfkB_Carbo_kinase"/>
</dbReference>
<dbReference type="InterPro" id="IPR011611">
    <property type="entry name" value="PfkB_dom"/>
</dbReference>
<dbReference type="InterPro" id="IPR029056">
    <property type="entry name" value="Ribokinase-like"/>
</dbReference>
<dbReference type="NCBIfam" id="TIGR04382">
    <property type="entry name" value="myo_inos_iolC_N"/>
    <property type="match status" value="1"/>
</dbReference>
<dbReference type="PANTHER" id="PTHR43085:SF49">
    <property type="entry name" value="5-DEHYDRO-2-DEOXYGLUCONOKINASE"/>
    <property type="match status" value="1"/>
</dbReference>
<dbReference type="PANTHER" id="PTHR43085">
    <property type="entry name" value="HEXOKINASE FAMILY MEMBER"/>
    <property type="match status" value="1"/>
</dbReference>
<dbReference type="Pfam" id="PF00294">
    <property type="entry name" value="PfkB"/>
    <property type="match status" value="1"/>
</dbReference>
<dbReference type="SUPFAM" id="SSF53613">
    <property type="entry name" value="Ribokinase-like"/>
    <property type="match status" value="1"/>
</dbReference>
<dbReference type="PROSITE" id="PS00584">
    <property type="entry name" value="PFKB_KINASES_2"/>
    <property type="match status" value="1"/>
</dbReference>
<protein>
    <recommendedName>
        <fullName evidence="1">5-dehydro-2-deoxygluconokinase</fullName>
        <ecNumber evidence="1">2.7.1.92</ecNumber>
    </recommendedName>
    <alternativeName>
        <fullName evidence="1">2-deoxy-5-keto-D-gluconate kinase</fullName>
        <shortName evidence="1">DKG kinase</shortName>
    </alternativeName>
</protein>
<feature type="chain" id="PRO_0000352293" description="5-dehydro-2-deoxygluconokinase">
    <location>
        <begin position="1"/>
        <end position="339"/>
    </location>
</feature>
<name>IOLC_CLOB8</name>
<proteinExistence type="inferred from homology"/>
<reference key="1">
    <citation type="submission" date="2007-06" db="EMBL/GenBank/DDBJ databases">
        <title>Complete sequence of Clostridium beijerinckii NCIMB 8052.</title>
        <authorList>
            <consortium name="US DOE Joint Genome Institute"/>
            <person name="Copeland A."/>
            <person name="Lucas S."/>
            <person name="Lapidus A."/>
            <person name="Barry K."/>
            <person name="Detter J.C."/>
            <person name="Glavina del Rio T."/>
            <person name="Hammon N."/>
            <person name="Israni S."/>
            <person name="Dalin E."/>
            <person name="Tice H."/>
            <person name="Pitluck S."/>
            <person name="Sims D."/>
            <person name="Brettin T."/>
            <person name="Bruce D."/>
            <person name="Tapia R."/>
            <person name="Brainard J."/>
            <person name="Schmutz J."/>
            <person name="Larimer F."/>
            <person name="Land M."/>
            <person name="Hauser L."/>
            <person name="Kyrpides N."/>
            <person name="Mikhailova N."/>
            <person name="Bennet G."/>
            <person name="Cann I."/>
            <person name="Chen J.-S."/>
            <person name="Contreras A.L."/>
            <person name="Jones D."/>
            <person name="Kashket E."/>
            <person name="Mitchell W."/>
            <person name="Stoddard S."/>
            <person name="Schwarz W."/>
            <person name="Qureshi N."/>
            <person name="Young M."/>
            <person name="Shi Z."/>
            <person name="Ezeji T."/>
            <person name="White B."/>
            <person name="Blaschek H."/>
            <person name="Richardson P."/>
        </authorList>
    </citation>
    <scope>NUCLEOTIDE SEQUENCE [LARGE SCALE GENOMIC DNA]</scope>
    <source>
        <strain>ATCC 51743 / NCIMB 8052</strain>
    </source>
</reference>
<sequence>MEYIKFDKARKMDIVPIGRVAIDFNPIDINKPLSESSTFKKYLGGSPANIAVGLARLGKKIGFIGKVSKDQFGEFVVNYFDNEGIDTSQIKYSKNGENLGLTFTEIASPTESSILMYRQGIADLELNVDEIDEEYIKNTKAIVISGTALAKSPSREAALKALELAKRNNTVVIFDVDYRAYNWKNSDEIAIYYSIAGKQSDIIMGSREEFDLMEKLITREKNSDEETAKRWLDYGNKIVVIKHGKEGSTAYTSDGKSYNIKPFPVKLLKSFGGGDAYASAFLYGLLEGWSIIDSLEFGSASAAMLVASHSCSQDMPTVEAIRNFIKEEKEEYGDMVARA</sequence>